<protein>
    <recommendedName>
        <fullName evidence="1">Urease accessory protein UreF</fullName>
    </recommendedName>
</protein>
<feature type="chain" id="PRO_0000067654" description="Urease accessory protein UreF">
    <location>
        <begin position="1"/>
        <end position="237"/>
    </location>
</feature>
<dbReference type="EMBL" id="U35248">
    <property type="protein sequence ID" value="AAC43566.1"/>
    <property type="molecule type" value="Genomic_DNA"/>
</dbReference>
<dbReference type="EMBL" id="CP002888">
    <property type="protein sequence ID" value="AEJ54134.1"/>
    <property type="molecule type" value="Genomic_DNA"/>
</dbReference>
<dbReference type="RefSeq" id="WP_002886562.1">
    <property type="nucleotide sequence ID" value="NC_017594.1"/>
</dbReference>
<dbReference type="SMR" id="Q55056"/>
<dbReference type="KEGG" id="stf:Ssal_01897"/>
<dbReference type="PATRIC" id="fig|1046629.4.peg.1684"/>
<dbReference type="eggNOG" id="COG0830">
    <property type="taxonomic scope" value="Bacteria"/>
</dbReference>
<dbReference type="GO" id="GO:0005737">
    <property type="term" value="C:cytoplasm"/>
    <property type="evidence" value="ECO:0007669"/>
    <property type="project" value="UniProtKB-SubCell"/>
</dbReference>
<dbReference type="GO" id="GO:0016151">
    <property type="term" value="F:nickel cation binding"/>
    <property type="evidence" value="ECO:0007669"/>
    <property type="project" value="UniProtKB-UniRule"/>
</dbReference>
<dbReference type="Gene3D" id="1.10.4190.10">
    <property type="entry name" value="Urease accessory protein UreF"/>
    <property type="match status" value="1"/>
</dbReference>
<dbReference type="HAMAP" id="MF_01385">
    <property type="entry name" value="UreF"/>
    <property type="match status" value="1"/>
</dbReference>
<dbReference type="InterPro" id="IPR002639">
    <property type="entry name" value="UreF"/>
</dbReference>
<dbReference type="InterPro" id="IPR038277">
    <property type="entry name" value="UreF_sf"/>
</dbReference>
<dbReference type="PANTHER" id="PTHR33620">
    <property type="entry name" value="UREASE ACCESSORY PROTEIN F"/>
    <property type="match status" value="1"/>
</dbReference>
<dbReference type="PANTHER" id="PTHR33620:SF1">
    <property type="entry name" value="UREASE ACCESSORY PROTEIN F"/>
    <property type="match status" value="1"/>
</dbReference>
<dbReference type="Pfam" id="PF01730">
    <property type="entry name" value="UreF"/>
    <property type="match status" value="1"/>
</dbReference>
<dbReference type="PIRSF" id="PIRSF009467">
    <property type="entry name" value="Ureas_acces_UreF"/>
    <property type="match status" value="1"/>
</dbReference>
<gene>
    <name evidence="1" type="primary">ureF</name>
    <name type="ordered locus">Ssal_01897</name>
</gene>
<keyword id="KW-0143">Chaperone</keyword>
<keyword id="KW-0963">Cytoplasm</keyword>
<keyword id="KW-0996">Nickel insertion</keyword>
<proteinExistence type="inferred from homology"/>
<evidence type="ECO:0000255" key="1">
    <source>
        <dbReference type="HAMAP-Rule" id="MF_01385"/>
    </source>
</evidence>
<name>UREF_STRE5</name>
<reference key="1">
    <citation type="journal article" date="1996" name="Infect. Immun.">
        <title>Streptococcus salivarius urease: genetic and biochemical characterization and expression in a dental plaque streptococcus.</title>
        <authorList>
            <person name="Chen Y.-Y.M."/>
            <person name="Clancy K.A."/>
            <person name="Burne R.A."/>
        </authorList>
    </citation>
    <scope>NUCLEOTIDE SEQUENCE [GENOMIC DNA]</scope>
    <source>
        <strain>57.I</strain>
    </source>
</reference>
<reference key="2">
    <citation type="journal article" date="2011" name="J. Bacteriol.">
        <title>Complete genome sequence of the ureolytic Streptococcus salivarius strain 57.I.</title>
        <authorList>
            <person name="Geng J."/>
            <person name="Huang S.C."/>
            <person name="Li S."/>
            <person name="Hu S."/>
            <person name="Chen Y.Y."/>
        </authorList>
    </citation>
    <scope>NUCLEOTIDE SEQUENCE [LARGE SCALE GENOMIC DNA]</scope>
    <source>
        <strain>57.I</strain>
    </source>
</reference>
<comment type="function">
    <text evidence="1">Required for maturation of urease via the functional incorporation of the urease nickel metallocenter.</text>
</comment>
<comment type="subunit">
    <text evidence="1">UreD, UreF and UreG form a complex that acts as a GTP-hydrolysis-dependent molecular chaperone, activating the urease apoprotein by helping to assemble the nickel containing metallocenter of UreC. The UreE protein probably delivers the nickel.</text>
</comment>
<comment type="subcellular location">
    <subcellularLocation>
        <location evidence="1">Cytoplasm</location>
    </subcellularLocation>
</comment>
<comment type="similarity">
    <text evidence="1">Belongs to the UreF family.</text>
</comment>
<accession>Q55056</accession>
<accession>F8HGJ8</accession>
<organism>
    <name type="scientific">Streptococcus salivarius (strain 57.I)</name>
    <dbReference type="NCBI Taxonomy" id="1046629"/>
    <lineage>
        <taxon>Bacteria</taxon>
        <taxon>Bacillati</taxon>
        <taxon>Bacillota</taxon>
        <taxon>Bacilli</taxon>
        <taxon>Lactobacillales</taxon>
        <taxon>Streptococcaceae</taxon>
        <taxon>Streptococcus</taxon>
    </lineage>
</organism>
<sequence length="237" mass="26906">MNINPFANVSLQDYLEIVQIVDSTFPIGSFNHSFGMENYLREDTVTDDKGYEEWQEAYLASQFKYGEGLVIKLVYDAMATDNLEQVWHYDKVLTVSTQARETRQGTKMIAKQMLRLIQRLHAIPVLDDYQSKIRKGEVFGNPAIVFALYVFNKGLGCSEAIALYGYSVISTMVQNAVRAIPLGQFAGQEIVLRSFSQLEKMTQEIQELDASYLGANTPGLELAQMKHETQVFRLFMS</sequence>